<accession>Q9NXZ2</accession>
<accession>B4E0C8</accession>
<accession>Q6NXR1</accession>
<sequence length="648" mass="72844">MSHHGGAPKASTWVVASRRSSTVSRAPERRPAEELNRTGPEGYSVGRGGRWRGTSRPPEAVAAGHEELPLCFALKSHFVGAVIGRGGSKIKNIQSTTNTTIQIIQEQPESLVKIFGSKAMQTKAKAVIDNFVKKLEENYNSECGIDTAFQPSVGKDGSTDNNVVAGDRPLIDWDQIREEGLKWQKTKWADLPPIKKNFYKESTATSAMSKVEADSWRKENFNITWDDLKDGEKRPIPNPTCTFDDAFQCYPEVMENIKKAGFQKPTPIQSQAWPIVLQGIDLIGVAQTGTGKTLCYLMPGFIHLVLQPSLKGQRNRPGMLVLTPTRELALQVEGECCKYSYKGLRSVCVYGGGNRDEQIEELKKGVDIIIATPGRLNDLQMSNFVNLKNITYLVLDEADKMLDMGFEPQIMKILLDVRPDRQTVMTSATWPHSVHRLAQSYLKEPMIVYVGTLDLVAVSSVKQNIIVTTEEEKWSHMQTFLQSMSSTDKVIVFVSRKAVADHLSSDLILGNISVESLHGDREQRDREKALENFKTGKVRILIATDLASRGLDVHDVTHVYNFDFPRNIEEYVHRIGRTGRAGRTGVSITTLTRNDWRVASELINILERANQSIPEELVSMAERFKAHQQKREMERKMERPQGRPKKFH</sequence>
<comment type="catalytic activity">
    <reaction>
        <text>ATP + H2O = ADP + phosphate + H(+)</text>
        <dbReference type="Rhea" id="RHEA:13065"/>
        <dbReference type="ChEBI" id="CHEBI:15377"/>
        <dbReference type="ChEBI" id="CHEBI:15378"/>
        <dbReference type="ChEBI" id="CHEBI:30616"/>
        <dbReference type="ChEBI" id="CHEBI:43474"/>
        <dbReference type="ChEBI" id="CHEBI:456216"/>
        <dbReference type="EC" id="3.6.4.13"/>
    </reaction>
</comment>
<comment type="interaction">
    <interactant intactId="EBI-10316543">
        <id>Q9NXZ2</id>
    </interactant>
    <interactant intactId="EBI-3867333">
        <id>A8MQ03</id>
        <label>CYSRT1</label>
    </interactant>
    <organismsDiffer>false</organismsDiffer>
    <experiments>3</experiments>
</comment>
<comment type="interaction">
    <interactant intactId="EBI-10316543">
        <id>Q9NXZ2</id>
    </interactant>
    <interactant intactId="EBI-21893959">
        <id>Q86TM3</id>
        <label>DDX53</label>
    </interactant>
    <organismsDiffer>false</organismsDiffer>
    <experiments>2</experiments>
</comment>
<comment type="interaction">
    <interactant intactId="EBI-10316543">
        <id>Q9NXZ2</id>
    </interactant>
    <interactant intactId="EBI-10171774">
        <id>P60410</id>
        <label>KRTAP10-8</label>
    </interactant>
    <organismsDiffer>false</organismsDiffer>
    <experiments>3</experiments>
</comment>
<comment type="alternative products">
    <event type="alternative splicing"/>
    <isoform>
        <id>Q9NXZ2-1</id>
        <name>1</name>
        <sequence type="displayed"/>
    </isoform>
    <isoform>
        <id>Q9NXZ2-2</id>
        <name>2</name>
        <sequence type="described" ref="VSP_056955 VSP_056956"/>
    </isoform>
</comment>
<comment type="tissue specificity">
    <text evidence="5">Expressed in testis. Expressed in many tumors of various histological types at a level that is 100-fold higher than the level observed in normal tissues except testis.</text>
</comment>
<comment type="similarity">
    <text evidence="8">Belongs to the DEAD box helicase family.</text>
</comment>
<comment type="online information" name="Atlas of Genetics and Cytogenetics in Oncology and Haematology">
    <link uri="https://atlasgeneticsoncology.org/gene/40288/DDX43"/>
</comment>
<dbReference type="EC" id="3.6.4.13"/>
<dbReference type="EMBL" id="AJ278110">
    <property type="protein sequence ID" value="CAB92442.1"/>
    <property type="molecule type" value="mRNA"/>
</dbReference>
<dbReference type="EMBL" id="AL136751">
    <property type="protein sequence ID" value="CAB66685.1"/>
    <property type="molecule type" value="mRNA"/>
</dbReference>
<dbReference type="EMBL" id="AK303324">
    <property type="protein sequence ID" value="BAG64390.1"/>
    <property type="molecule type" value="mRNA"/>
</dbReference>
<dbReference type="EMBL" id="AC019205">
    <property type="status" value="NOT_ANNOTATED_CDS"/>
    <property type="molecule type" value="Genomic_DNA"/>
</dbReference>
<dbReference type="EMBL" id="BC066938">
    <property type="protein sequence ID" value="AAH66938.1"/>
    <property type="molecule type" value="mRNA"/>
</dbReference>
<dbReference type="CCDS" id="CCDS4977.1">
    <molecule id="Q9NXZ2-1"/>
</dbReference>
<dbReference type="RefSeq" id="NP_061135.2">
    <molecule id="Q9NXZ2-1"/>
    <property type="nucleotide sequence ID" value="NM_018665.3"/>
</dbReference>
<dbReference type="SMR" id="Q9NXZ2"/>
<dbReference type="BioGRID" id="120690">
    <property type="interactions" value="23"/>
</dbReference>
<dbReference type="FunCoup" id="Q9NXZ2">
    <property type="interactions" value="194"/>
</dbReference>
<dbReference type="IntAct" id="Q9NXZ2">
    <property type="interactions" value="6"/>
</dbReference>
<dbReference type="MINT" id="Q9NXZ2"/>
<dbReference type="STRING" id="9606.ENSP00000359361"/>
<dbReference type="GlyGen" id="Q9NXZ2">
    <property type="glycosylation" value="1 site, 1 O-linked glycan (1 site)"/>
</dbReference>
<dbReference type="iPTMnet" id="Q9NXZ2"/>
<dbReference type="PhosphoSitePlus" id="Q9NXZ2"/>
<dbReference type="BioMuta" id="DDX43"/>
<dbReference type="DMDM" id="145559466"/>
<dbReference type="jPOST" id="Q9NXZ2"/>
<dbReference type="MassIVE" id="Q9NXZ2"/>
<dbReference type="PaxDb" id="9606-ENSP00000359361"/>
<dbReference type="PeptideAtlas" id="Q9NXZ2"/>
<dbReference type="ProteomicsDB" id="5666"/>
<dbReference type="ProteomicsDB" id="83146">
    <molecule id="Q9NXZ2-1"/>
</dbReference>
<dbReference type="Pumba" id="Q9NXZ2"/>
<dbReference type="Antibodypedia" id="31333">
    <property type="antibodies" value="150 antibodies from 25 providers"/>
</dbReference>
<dbReference type="DNASU" id="55510"/>
<dbReference type="Ensembl" id="ENST00000370336.5">
    <molecule id="Q9NXZ2-1"/>
    <property type="protein sequence ID" value="ENSP00000359361.4"/>
    <property type="gene ID" value="ENSG00000080007.8"/>
</dbReference>
<dbReference type="GeneID" id="55510"/>
<dbReference type="KEGG" id="hsa:55510"/>
<dbReference type="MANE-Select" id="ENST00000370336.5">
    <property type="protein sequence ID" value="ENSP00000359361.4"/>
    <property type="RefSeq nucleotide sequence ID" value="NM_018665.3"/>
    <property type="RefSeq protein sequence ID" value="NP_061135.2"/>
</dbReference>
<dbReference type="UCSC" id="uc003pgw.4">
    <molecule id="Q9NXZ2-1"/>
    <property type="organism name" value="human"/>
</dbReference>
<dbReference type="AGR" id="HGNC:18677"/>
<dbReference type="CTD" id="55510"/>
<dbReference type="DisGeNET" id="55510"/>
<dbReference type="GeneCards" id="DDX43"/>
<dbReference type="HGNC" id="HGNC:18677">
    <property type="gene designation" value="DDX43"/>
</dbReference>
<dbReference type="HPA" id="ENSG00000080007">
    <property type="expression patterns" value="Group enriched (placenta, testis)"/>
</dbReference>
<dbReference type="MIM" id="606286">
    <property type="type" value="gene"/>
</dbReference>
<dbReference type="neXtProt" id="NX_Q9NXZ2"/>
<dbReference type="OpenTargets" id="ENSG00000080007"/>
<dbReference type="PharmGKB" id="PA134988734"/>
<dbReference type="VEuPathDB" id="HostDB:ENSG00000080007"/>
<dbReference type="eggNOG" id="KOG0336">
    <property type="taxonomic scope" value="Eukaryota"/>
</dbReference>
<dbReference type="GeneTree" id="ENSGT00940000164259"/>
<dbReference type="HOGENOM" id="CLU_003041_16_8_1"/>
<dbReference type="InParanoid" id="Q9NXZ2"/>
<dbReference type="OMA" id="RWAKCPP"/>
<dbReference type="OrthoDB" id="196131at2759"/>
<dbReference type="PAN-GO" id="Q9NXZ2">
    <property type="GO annotations" value="2 GO annotations based on evolutionary models"/>
</dbReference>
<dbReference type="PhylomeDB" id="Q9NXZ2"/>
<dbReference type="TreeFam" id="TF312949"/>
<dbReference type="PathwayCommons" id="Q9NXZ2"/>
<dbReference type="SignaLink" id="Q9NXZ2"/>
<dbReference type="BioGRID-ORCS" id="55510">
    <property type="hits" value="15 hits in 1148 CRISPR screens"/>
</dbReference>
<dbReference type="CD-CODE" id="91857CE7">
    <property type="entry name" value="Nucleolus"/>
</dbReference>
<dbReference type="ChiTaRS" id="DDX43">
    <property type="organism name" value="human"/>
</dbReference>
<dbReference type="GeneWiki" id="DDX43"/>
<dbReference type="GenomeRNAi" id="55510"/>
<dbReference type="Pharos" id="Q9NXZ2">
    <property type="development level" value="Tbio"/>
</dbReference>
<dbReference type="PRO" id="PR:Q9NXZ2"/>
<dbReference type="Proteomes" id="UP000005640">
    <property type="component" value="Chromosome 6"/>
</dbReference>
<dbReference type="RNAct" id="Q9NXZ2">
    <property type="molecule type" value="protein"/>
</dbReference>
<dbReference type="Bgee" id="ENSG00000080007">
    <property type="expression patterns" value="Expressed in oocyte and 115 other cell types or tissues"/>
</dbReference>
<dbReference type="GO" id="GO:0005524">
    <property type="term" value="F:ATP binding"/>
    <property type="evidence" value="ECO:0007669"/>
    <property type="project" value="UniProtKB-KW"/>
</dbReference>
<dbReference type="GO" id="GO:0016887">
    <property type="term" value="F:ATP hydrolysis activity"/>
    <property type="evidence" value="ECO:0007669"/>
    <property type="project" value="RHEA"/>
</dbReference>
<dbReference type="GO" id="GO:0003729">
    <property type="term" value="F:mRNA binding"/>
    <property type="evidence" value="ECO:0000318"/>
    <property type="project" value="GO_Central"/>
</dbReference>
<dbReference type="GO" id="GO:0003723">
    <property type="term" value="F:RNA binding"/>
    <property type="evidence" value="ECO:0000304"/>
    <property type="project" value="ProtInc"/>
</dbReference>
<dbReference type="GO" id="GO:0003724">
    <property type="term" value="F:RNA helicase activity"/>
    <property type="evidence" value="ECO:0000318"/>
    <property type="project" value="GO_Central"/>
</dbReference>
<dbReference type="CDD" id="cd17958">
    <property type="entry name" value="DEADc_DDX43_DDX53"/>
    <property type="match status" value="1"/>
</dbReference>
<dbReference type="CDD" id="cd22430">
    <property type="entry name" value="KH-I_DDX43_DDX53"/>
    <property type="match status" value="1"/>
</dbReference>
<dbReference type="CDD" id="cd18787">
    <property type="entry name" value="SF2_C_DEAD"/>
    <property type="match status" value="1"/>
</dbReference>
<dbReference type="FunFam" id="3.40.50.300:FF:000008">
    <property type="entry name" value="ATP-dependent RNA helicase RhlB"/>
    <property type="match status" value="1"/>
</dbReference>
<dbReference type="FunFam" id="3.30.1370.10:FF:000108">
    <property type="entry name" value="DEAD box polypeptide 43 (Predicted)"/>
    <property type="match status" value="1"/>
</dbReference>
<dbReference type="FunFam" id="3.40.50.300:FF:000079">
    <property type="entry name" value="probable ATP-dependent RNA helicase DDX17"/>
    <property type="match status" value="1"/>
</dbReference>
<dbReference type="Gene3D" id="3.30.1370.10">
    <property type="entry name" value="K Homology domain, type 1"/>
    <property type="match status" value="1"/>
</dbReference>
<dbReference type="Gene3D" id="3.40.50.300">
    <property type="entry name" value="P-loop containing nucleotide triphosphate hydrolases"/>
    <property type="match status" value="2"/>
</dbReference>
<dbReference type="InterPro" id="IPR011545">
    <property type="entry name" value="DEAD/DEAH_box_helicase_dom"/>
</dbReference>
<dbReference type="InterPro" id="IPR014001">
    <property type="entry name" value="Helicase_ATP-bd"/>
</dbReference>
<dbReference type="InterPro" id="IPR001650">
    <property type="entry name" value="Helicase_C-like"/>
</dbReference>
<dbReference type="InterPro" id="IPR004087">
    <property type="entry name" value="KH_dom"/>
</dbReference>
<dbReference type="InterPro" id="IPR004088">
    <property type="entry name" value="KH_dom_type_1"/>
</dbReference>
<dbReference type="InterPro" id="IPR036612">
    <property type="entry name" value="KH_dom_type_1_sf"/>
</dbReference>
<dbReference type="InterPro" id="IPR027417">
    <property type="entry name" value="P-loop_NTPase"/>
</dbReference>
<dbReference type="InterPro" id="IPR000629">
    <property type="entry name" value="RNA-helicase_DEAD-box_CS"/>
</dbReference>
<dbReference type="InterPro" id="IPR014014">
    <property type="entry name" value="RNA_helicase_DEAD_Q_motif"/>
</dbReference>
<dbReference type="PANTHER" id="PTHR47958">
    <property type="entry name" value="ATP-DEPENDENT RNA HELICASE DBP3"/>
    <property type="match status" value="1"/>
</dbReference>
<dbReference type="Pfam" id="PF00270">
    <property type="entry name" value="DEAD"/>
    <property type="match status" value="1"/>
</dbReference>
<dbReference type="Pfam" id="PF00271">
    <property type="entry name" value="Helicase_C"/>
    <property type="match status" value="1"/>
</dbReference>
<dbReference type="Pfam" id="PF00013">
    <property type="entry name" value="KH_1"/>
    <property type="match status" value="1"/>
</dbReference>
<dbReference type="SMART" id="SM00487">
    <property type="entry name" value="DEXDc"/>
    <property type="match status" value="1"/>
</dbReference>
<dbReference type="SMART" id="SM00490">
    <property type="entry name" value="HELICc"/>
    <property type="match status" value="1"/>
</dbReference>
<dbReference type="SMART" id="SM00322">
    <property type="entry name" value="KH"/>
    <property type="match status" value="1"/>
</dbReference>
<dbReference type="SUPFAM" id="SSF54791">
    <property type="entry name" value="Eukaryotic type KH-domain (KH-domain type I)"/>
    <property type="match status" value="1"/>
</dbReference>
<dbReference type="SUPFAM" id="SSF52540">
    <property type="entry name" value="P-loop containing nucleoside triphosphate hydrolases"/>
    <property type="match status" value="1"/>
</dbReference>
<dbReference type="PROSITE" id="PS00039">
    <property type="entry name" value="DEAD_ATP_HELICASE"/>
    <property type="match status" value="1"/>
</dbReference>
<dbReference type="PROSITE" id="PS51192">
    <property type="entry name" value="HELICASE_ATP_BIND_1"/>
    <property type="match status" value="1"/>
</dbReference>
<dbReference type="PROSITE" id="PS51194">
    <property type="entry name" value="HELICASE_CTER"/>
    <property type="match status" value="1"/>
</dbReference>
<dbReference type="PROSITE" id="PS50084">
    <property type="entry name" value="KH_TYPE_1"/>
    <property type="match status" value="1"/>
</dbReference>
<dbReference type="PROSITE" id="PS51195">
    <property type="entry name" value="Q_MOTIF"/>
    <property type="match status" value="1"/>
</dbReference>
<name>DDX43_HUMAN</name>
<feature type="chain" id="PRO_0000054972" description="Probable ATP-dependent RNA helicase DDX43">
    <location>
        <begin position="1"/>
        <end position="648"/>
    </location>
</feature>
<feature type="domain" description="KH" evidence="1">
    <location>
        <begin position="67"/>
        <end position="128"/>
    </location>
</feature>
<feature type="domain" description="Helicase ATP-binding" evidence="2">
    <location>
        <begin position="273"/>
        <end position="448"/>
    </location>
</feature>
<feature type="domain" description="Helicase C-terminal" evidence="3">
    <location>
        <begin position="460"/>
        <end position="621"/>
    </location>
</feature>
<feature type="region of interest" description="Disordered" evidence="4">
    <location>
        <begin position="1"/>
        <end position="60"/>
    </location>
</feature>
<feature type="region of interest" description="Disordered" evidence="4">
    <location>
        <begin position="628"/>
        <end position="648"/>
    </location>
</feature>
<feature type="short sequence motif" description="Q motif">
    <location>
        <begin position="242"/>
        <end position="270"/>
    </location>
</feature>
<feature type="short sequence motif" description="DEAD box">
    <location>
        <begin position="396"/>
        <end position="399"/>
    </location>
</feature>
<feature type="compositionally biased region" description="Low complexity" evidence="4">
    <location>
        <begin position="10"/>
        <end position="25"/>
    </location>
</feature>
<feature type="compositionally biased region" description="Basic and acidic residues" evidence="4">
    <location>
        <begin position="26"/>
        <end position="36"/>
    </location>
</feature>
<feature type="compositionally biased region" description="Basic and acidic residues" evidence="4">
    <location>
        <begin position="628"/>
        <end position="641"/>
    </location>
</feature>
<feature type="binding site" evidence="2">
    <location>
        <begin position="286"/>
        <end position="293"/>
    </location>
    <ligand>
        <name>ATP</name>
        <dbReference type="ChEBI" id="CHEBI:30616"/>
    </ligand>
</feature>
<feature type="splice variant" id="VSP_056955" description="In isoform 2." evidence="7">
    <original>DLPPIK</original>
    <variation>GKKILI</variation>
    <location>
        <begin position="190"/>
        <end position="195"/>
    </location>
</feature>
<feature type="splice variant" id="VSP_056956" description="In isoform 2." evidence="7">
    <location>
        <begin position="196"/>
        <end position="648"/>
    </location>
</feature>
<feature type="sequence variant" id="VAR_057234" description="In dbSNP:rs311686." evidence="5 6">
    <original>K</original>
    <variation>E</variation>
    <location>
        <position position="625"/>
    </location>
</feature>
<feature type="sequence variant" id="VAR_057235" description="In dbSNP:rs311685." evidence="5 6">
    <original>Q</original>
    <variation>R</variation>
    <location>
        <position position="629"/>
    </location>
</feature>
<feature type="sequence conflict" description="In Ref. 5; AAH66938." evidence="8" ref="5">
    <original>A</original>
    <variation>D</variation>
    <location>
        <position position="60"/>
    </location>
</feature>
<organism>
    <name type="scientific">Homo sapiens</name>
    <name type="common">Human</name>
    <dbReference type="NCBI Taxonomy" id="9606"/>
    <lineage>
        <taxon>Eukaryota</taxon>
        <taxon>Metazoa</taxon>
        <taxon>Chordata</taxon>
        <taxon>Craniata</taxon>
        <taxon>Vertebrata</taxon>
        <taxon>Euteleostomi</taxon>
        <taxon>Mammalia</taxon>
        <taxon>Eutheria</taxon>
        <taxon>Euarchontoglires</taxon>
        <taxon>Primates</taxon>
        <taxon>Haplorrhini</taxon>
        <taxon>Catarrhini</taxon>
        <taxon>Hominidae</taxon>
        <taxon>Homo</taxon>
    </lineage>
</organism>
<keyword id="KW-0025">Alternative splicing</keyword>
<keyword id="KW-0067">ATP-binding</keyword>
<keyword id="KW-0347">Helicase</keyword>
<keyword id="KW-0378">Hydrolase</keyword>
<keyword id="KW-0547">Nucleotide-binding</keyword>
<keyword id="KW-1267">Proteomics identification</keyword>
<keyword id="KW-1185">Reference proteome</keyword>
<keyword id="KW-0694">RNA-binding</keyword>
<proteinExistence type="evidence at protein level"/>
<reference key="1">
    <citation type="journal article" date="2000" name="Cancer Res.">
        <title>Identification on a human sarcoma of two new genes with tumor-specific expression.</title>
        <authorList>
            <person name="Martelange V.M.F."/>
            <person name="De Smet C."/>
            <person name="De Plaen E."/>
            <person name="Lurquin C."/>
            <person name="Boon T."/>
        </authorList>
    </citation>
    <scope>NUCLEOTIDE SEQUENCE [MRNA] (ISOFORM 1)</scope>
    <scope>VARIANTS GLU-625 AND ARG-629</scope>
    <scope>TISSUE SPECIFICITY</scope>
</reference>
<reference key="2">
    <citation type="journal article" date="2001" name="Genome Res.">
        <title>Towards a catalog of human genes and proteins: sequencing and analysis of 500 novel complete protein coding human cDNAs.</title>
        <authorList>
            <person name="Wiemann S."/>
            <person name="Weil B."/>
            <person name="Wellenreuther R."/>
            <person name="Gassenhuber J."/>
            <person name="Glassl S."/>
            <person name="Ansorge W."/>
            <person name="Boecher M."/>
            <person name="Bloecker H."/>
            <person name="Bauersachs S."/>
            <person name="Blum H."/>
            <person name="Lauber J."/>
            <person name="Duesterhoeft A."/>
            <person name="Beyer A."/>
            <person name="Koehrer K."/>
            <person name="Strack N."/>
            <person name="Mewes H.-W."/>
            <person name="Ottenwaelder B."/>
            <person name="Obermaier B."/>
            <person name="Tampe J."/>
            <person name="Heubner D."/>
            <person name="Wambutt R."/>
            <person name="Korn B."/>
            <person name="Klein M."/>
            <person name="Poustka A."/>
        </authorList>
    </citation>
    <scope>NUCLEOTIDE SEQUENCE [LARGE SCALE MRNA] (ISOFORM 1)</scope>
    <scope>VARIANTS GLU-625 AND ARG-629</scope>
    <source>
        <tissue>Testis</tissue>
    </source>
</reference>
<reference key="3">
    <citation type="journal article" date="2004" name="Nat. Genet.">
        <title>Complete sequencing and characterization of 21,243 full-length human cDNAs.</title>
        <authorList>
            <person name="Ota T."/>
            <person name="Suzuki Y."/>
            <person name="Nishikawa T."/>
            <person name="Otsuki T."/>
            <person name="Sugiyama T."/>
            <person name="Irie R."/>
            <person name="Wakamatsu A."/>
            <person name="Hayashi K."/>
            <person name="Sato H."/>
            <person name="Nagai K."/>
            <person name="Kimura K."/>
            <person name="Makita H."/>
            <person name="Sekine M."/>
            <person name="Obayashi M."/>
            <person name="Nishi T."/>
            <person name="Shibahara T."/>
            <person name="Tanaka T."/>
            <person name="Ishii S."/>
            <person name="Yamamoto J."/>
            <person name="Saito K."/>
            <person name="Kawai Y."/>
            <person name="Isono Y."/>
            <person name="Nakamura Y."/>
            <person name="Nagahari K."/>
            <person name="Murakami K."/>
            <person name="Yasuda T."/>
            <person name="Iwayanagi T."/>
            <person name="Wagatsuma M."/>
            <person name="Shiratori A."/>
            <person name="Sudo H."/>
            <person name="Hosoiri T."/>
            <person name="Kaku Y."/>
            <person name="Kodaira H."/>
            <person name="Kondo H."/>
            <person name="Sugawara M."/>
            <person name="Takahashi M."/>
            <person name="Kanda K."/>
            <person name="Yokoi T."/>
            <person name="Furuya T."/>
            <person name="Kikkawa E."/>
            <person name="Omura Y."/>
            <person name="Abe K."/>
            <person name="Kamihara K."/>
            <person name="Katsuta N."/>
            <person name="Sato K."/>
            <person name="Tanikawa M."/>
            <person name="Yamazaki M."/>
            <person name="Ninomiya K."/>
            <person name="Ishibashi T."/>
            <person name="Yamashita H."/>
            <person name="Murakawa K."/>
            <person name="Fujimori K."/>
            <person name="Tanai H."/>
            <person name="Kimata M."/>
            <person name="Watanabe M."/>
            <person name="Hiraoka S."/>
            <person name="Chiba Y."/>
            <person name="Ishida S."/>
            <person name="Ono Y."/>
            <person name="Takiguchi S."/>
            <person name="Watanabe S."/>
            <person name="Yosida M."/>
            <person name="Hotuta T."/>
            <person name="Kusano J."/>
            <person name="Kanehori K."/>
            <person name="Takahashi-Fujii A."/>
            <person name="Hara H."/>
            <person name="Tanase T.-O."/>
            <person name="Nomura Y."/>
            <person name="Togiya S."/>
            <person name="Komai F."/>
            <person name="Hara R."/>
            <person name="Takeuchi K."/>
            <person name="Arita M."/>
            <person name="Imose N."/>
            <person name="Musashino K."/>
            <person name="Yuuki H."/>
            <person name="Oshima A."/>
            <person name="Sasaki N."/>
            <person name="Aotsuka S."/>
            <person name="Yoshikawa Y."/>
            <person name="Matsunawa H."/>
            <person name="Ichihara T."/>
            <person name="Shiohata N."/>
            <person name="Sano S."/>
            <person name="Moriya S."/>
            <person name="Momiyama H."/>
            <person name="Satoh N."/>
            <person name="Takami S."/>
            <person name="Terashima Y."/>
            <person name="Suzuki O."/>
            <person name="Nakagawa S."/>
            <person name="Senoh A."/>
            <person name="Mizoguchi H."/>
            <person name="Goto Y."/>
            <person name="Shimizu F."/>
            <person name="Wakebe H."/>
            <person name="Hishigaki H."/>
            <person name="Watanabe T."/>
            <person name="Sugiyama A."/>
            <person name="Takemoto M."/>
            <person name="Kawakami B."/>
            <person name="Yamazaki M."/>
            <person name="Watanabe K."/>
            <person name="Kumagai A."/>
            <person name="Itakura S."/>
            <person name="Fukuzumi Y."/>
            <person name="Fujimori Y."/>
            <person name="Komiyama M."/>
            <person name="Tashiro H."/>
            <person name="Tanigami A."/>
            <person name="Fujiwara T."/>
            <person name="Ono T."/>
            <person name="Yamada K."/>
            <person name="Fujii Y."/>
            <person name="Ozaki K."/>
            <person name="Hirao M."/>
            <person name="Ohmori Y."/>
            <person name="Kawabata A."/>
            <person name="Hikiji T."/>
            <person name="Kobatake N."/>
            <person name="Inagaki H."/>
            <person name="Ikema Y."/>
            <person name="Okamoto S."/>
            <person name="Okitani R."/>
            <person name="Kawakami T."/>
            <person name="Noguchi S."/>
            <person name="Itoh T."/>
            <person name="Shigeta K."/>
            <person name="Senba T."/>
            <person name="Matsumura K."/>
            <person name="Nakajima Y."/>
            <person name="Mizuno T."/>
            <person name="Morinaga M."/>
            <person name="Sasaki M."/>
            <person name="Togashi T."/>
            <person name="Oyama M."/>
            <person name="Hata H."/>
            <person name="Watanabe M."/>
            <person name="Komatsu T."/>
            <person name="Mizushima-Sugano J."/>
            <person name="Satoh T."/>
            <person name="Shirai Y."/>
            <person name="Takahashi Y."/>
            <person name="Nakagawa K."/>
            <person name="Okumura K."/>
            <person name="Nagase T."/>
            <person name="Nomura N."/>
            <person name="Kikuchi H."/>
            <person name="Masuho Y."/>
            <person name="Yamashita R."/>
            <person name="Nakai K."/>
            <person name="Yada T."/>
            <person name="Nakamura Y."/>
            <person name="Ohara O."/>
            <person name="Isogai T."/>
            <person name="Sugano S."/>
        </authorList>
    </citation>
    <scope>NUCLEOTIDE SEQUENCE [LARGE SCALE MRNA] (ISOFORM 2)</scope>
    <source>
        <tissue>Thymus</tissue>
    </source>
</reference>
<reference key="4">
    <citation type="journal article" date="2003" name="Nature">
        <title>The DNA sequence and analysis of human chromosome 6.</title>
        <authorList>
            <person name="Mungall A.J."/>
            <person name="Palmer S.A."/>
            <person name="Sims S.K."/>
            <person name="Edwards C.A."/>
            <person name="Ashurst J.L."/>
            <person name="Wilming L."/>
            <person name="Jones M.C."/>
            <person name="Horton R."/>
            <person name="Hunt S.E."/>
            <person name="Scott C.E."/>
            <person name="Gilbert J.G.R."/>
            <person name="Clamp M.E."/>
            <person name="Bethel G."/>
            <person name="Milne S."/>
            <person name="Ainscough R."/>
            <person name="Almeida J.P."/>
            <person name="Ambrose K.D."/>
            <person name="Andrews T.D."/>
            <person name="Ashwell R.I.S."/>
            <person name="Babbage A.K."/>
            <person name="Bagguley C.L."/>
            <person name="Bailey J."/>
            <person name="Banerjee R."/>
            <person name="Barker D.J."/>
            <person name="Barlow K.F."/>
            <person name="Bates K."/>
            <person name="Beare D.M."/>
            <person name="Beasley H."/>
            <person name="Beasley O."/>
            <person name="Bird C.P."/>
            <person name="Blakey S.E."/>
            <person name="Bray-Allen S."/>
            <person name="Brook J."/>
            <person name="Brown A.J."/>
            <person name="Brown J.Y."/>
            <person name="Burford D.C."/>
            <person name="Burrill W."/>
            <person name="Burton J."/>
            <person name="Carder C."/>
            <person name="Carter N.P."/>
            <person name="Chapman J.C."/>
            <person name="Clark S.Y."/>
            <person name="Clark G."/>
            <person name="Clee C.M."/>
            <person name="Clegg S."/>
            <person name="Cobley V."/>
            <person name="Collier R.E."/>
            <person name="Collins J.E."/>
            <person name="Colman L.K."/>
            <person name="Corby N.R."/>
            <person name="Coville G.J."/>
            <person name="Culley K.M."/>
            <person name="Dhami P."/>
            <person name="Davies J."/>
            <person name="Dunn M."/>
            <person name="Earthrowl M.E."/>
            <person name="Ellington A.E."/>
            <person name="Evans K.A."/>
            <person name="Faulkner L."/>
            <person name="Francis M.D."/>
            <person name="Frankish A."/>
            <person name="Frankland J."/>
            <person name="French L."/>
            <person name="Garner P."/>
            <person name="Garnett J."/>
            <person name="Ghori M.J."/>
            <person name="Gilby L.M."/>
            <person name="Gillson C.J."/>
            <person name="Glithero R.J."/>
            <person name="Grafham D.V."/>
            <person name="Grant M."/>
            <person name="Gribble S."/>
            <person name="Griffiths C."/>
            <person name="Griffiths M.N.D."/>
            <person name="Hall R."/>
            <person name="Halls K.S."/>
            <person name="Hammond S."/>
            <person name="Harley J.L."/>
            <person name="Hart E.A."/>
            <person name="Heath P.D."/>
            <person name="Heathcott R."/>
            <person name="Holmes S.J."/>
            <person name="Howden P.J."/>
            <person name="Howe K.L."/>
            <person name="Howell G.R."/>
            <person name="Huckle E."/>
            <person name="Humphray S.J."/>
            <person name="Humphries M.D."/>
            <person name="Hunt A.R."/>
            <person name="Johnson C.M."/>
            <person name="Joy A.A."/>
            <person name="Kay M."/>
            <person name="Keenan S.J."/>
            <person name="Kimberley A.M."/>
            <person name="King A."/>
            <person name="Laird G.K."/>
            <person name="Langford C."/>
            <person name="Lawlor S."/>
            <person name="Leongamornlert D.A."/>
            <person name="Leversha M."/>
            <person name="Lloyd C.R."/>
            <person name="Lloyd D.M."/>
            <person name="Loveland J.E."/>
            <person name="Lovell J."/>
            <person name="Martin S."/>
            <person name="Mashreghi-Mohammadi M."/>
            <person name="Maslen G.L."/>
            <person name="Matthews L."/>
            <person name="McCann O.T."/>
            <person name="McLaren S.J."/>
            <person name="McLay K."/>
            <person name="McMurray A."/>
            <person name="Moore M.J.F."/>
            <person name="Mullikin J.C."/>
            <person name="Niblett D."/>
            <person name="Nickerson T."/>
            <person name="Novik K.L."/>
            <person name="Oliver K."/>
            <person name="Overton-Larty E.K."/>
            <person name="Parker A."/>
            <person name="Patel R."/>
            <person name="Pearce A.V."/>
            <person name="Peck A.I."/>
            <person name="Phillimore B.J.C.T."/>
            <person name="Phillips S."/>
            <person name="Plumb R.W."/>
            <person name="Porter K.M."/>
            <person name="Ramsey Y."/>
            <person name="Ranby S.A."/>
            <person name="Rice C.M."/>
            <person name="Ross M.T."/>
            <person name="Searle S.M."/>
            <person name="Sehra H.K."/>
            <person name="Sheridan E."/>
            <person name="Skuce C.D."/>
            <person name="Smith S."/>
            <person name="Smith M."/>
            <person name="Spraggon L."/>
            <person name="Squares S.L."/>
            <person name="Steward C.A."/>
            <person name="Sycamore N."/>
            <person name="Tamlyn-Hall G."/>
            <person name="Tester J."/>
            <person name="Theaker A.J."/>
            <person name="Thomas D.W."/>
            <person name="Thorpe A."/>
            <person name="Tracey A."/>
            <person name="Tromans A."/>
            <person name="Tubby B."/>
            <person name="Wall M."/>
            <person name="Wallis J.M."/>
            <person name="West A.P."/>
            <person name="White S.S."/>
            <person name="Whitehead S.L."/>
            <person name="Whittaker H."/>
            <person name="Wild A."/>
            <person name="Willey D.J."/>
            <person name="Wilmer T.E."/>
            <person name="Wood J.M."/>
            <person name="Wray P.W."/>
            <person name="Wyatt J.C."/>
            <person name="Young L."/>
            <person name="Younger R.M."/>
            <person name="Bentley D.R."/>
            <person name="Coulson A."/>
            <person name="Durbin R.M."/>
            <person name="Hubbard T."/>
            <person name="Sulston J.E."/>
            <person name="Dunham I."/>
            <person name="Rogers J."/>
            <person name="Beck S."/>
        </authorList>
    </citation>
    <scope>NUCLEOTIDE SEQUENCE [LARGE SCALE GENOMIC DNA]</scope>
</reference>
<reference key="5">
    <citation type="journal article" date="2004" name="Genome Res.">
        <title>The status, quality, and expansion of the NIH full-length cDNA project: the Mammalian Gene Collection (MGC).</title>
        <authorList>
            <consortium name="The MGC Project Team"/>
        </authorList>
    </citation>
    <scope>NUCLEOTIDE SEQUENCE [LARGE SCALE MRNA] (ISOFORM 1)</scope>
    <source>
        <tissue>Testis</tissue>
    </source>
</reference>
<gene>
    <name type="primary">DDX43</name>
    <name type="synonym">HAGE</name>
</gene>
<protein>
    <recommendedName>
        <fullName>Probable ATP-dependent RNA helicase DDX43</fullName>
        <ecNumber>3.6.4.13</ecNumber>
    </recommendedName>
    <alternativeName>
        <fullName>Cancer/testis antigen 13</fullName>
        <shortName>CT13</shortName>
    </alternativeName>
    <alternativeName>
        <fullName>DEAD box protein 43</fullName>
    </alternativeName>
    <alternativeName>
        <fullName>DEAD box protein HAGE</fullName>
    </alternativeName>
    <alternativeName>
        <fullName>Helical antigen</fullName>
    </alternativeName>
</protein>
<evidence type="ECO:0000255" key="1">
    <source>
        <dbReference type="PROSITE-ProRule" id="PRU00117"/>
    </source>
</evidence>
<evidence type="ECO:0000255" key="2">
    <source>
        <dbReference type="PROSITE-ProRule" id="PRU00541"/>
    </source>
</evidence>
<evidence type="ECO:0000255" key="3">
    <source>
        <dbReference type="PROSITE-ProRule" id="PRU00542"/>
    </source>
</evidence>
<evidence type="ECO:0000256" key="4">
    <source>
        <dbReference type="SAM" id="MobiDB-lite"/>
    </source>
</evidence>
<evidence type="ECO:0000269" key="5">
    <source>
    </source>
</evidence>
<evidence type="ECO:0000269" key="6">
    <source>
    </source>
</evidence>
<evidence type="ECO:0000303" key="7">
    <source>
    </source>
</evidence>
<evidence type="ECO:0000305" key="8"/>